<evidence type="ECO:0000255" key="1"/>
<evidence type="ECO:0000305" key="2"/>
<proteinExistence type="inferred from homology"/>
<feature type="propeptide" id="PRO_0000020786" evidence="1">
    <location>
        <begin position="1"/>
        <end status="unknown"/>
    </location>
</feature>
<feature type="peptide" id="PRO_0000020787" description="Mating-type pheromone BAP1(2)">
    <location>
        <begin status="unknown"/>
        <end position="45"/>
    </location>
</feature>
<feature type="propeptide" id="PRO_0000020788" description="Removed in mature form" evidence="1">
    <location>
        <begin position="46"/>
        <end position="48"/>
    </location>
</feature>
<feature type="modified residue" description="Cysteine methyl ester" evidence="1">
    <location>
        <position position="45"/>
    </location>
</feature>
<feature type="lipid moiety-binding region" description="S-farnesyl cysteine" evidence="1">
    <location>
        <position position="45"/>
    </location>
</feature>
<organism>
    <name type="scientific">Schizophyllum commune</name>
    <name type="common">Split gill fungus</name>
    <dbReference type="NCBI Taxonomy" id="5334"/>
    <lineage>
        <taxon>Eukaryota</taxon>
        <taxon>Fungi</taxon>
        <taxon>Dikarya</taxon>
        <taxon>Basidiomycota</taxon>
        <taxon>Agaricomycotina</taxon>
        <taxon>Agaricomycetes</taxon>
        <taxon>Agaricomycetidae</taxon>
        <taxon>Agaricales</taxon>
        <taxon>Schizophyllaceae</taxon>
        <taxon>Schizophyllum</taxon>
    </lineage>
</organism>
<keyword id="KW-1003">Cell membrane</keyword>
<keyword id="KW-0449">Lipoprotein</keyword>
<keyword id="KW-0472">Membrane</keyword>
<keyword id="KW-0488">Methylation</keyword>
<keyword id="KW-0588">Pheromone</keyword>
<keyword id="KW-0636">Prenylation</keyword>
<reference key="1">
    <citation type="journal article" date="1995" name="EMBO J.">
        <title>The mating-type locus B alpha 1 of Schizophyllum commune contains a pheromone receptor gene and putative pheromone genes.</title>
        <authorList>
            <person name="Wendland J."/>
            <person name="Vaillancourt L.J."/>
            <person name="Hegner J."/>
            <person name="Lengeler K.B."/>
            <person name="Laddison K.J."/>
            <person name="Specht C.A."/>
            <person name="Raper C.A."/>
            <person name="Kothe E."/>
        </authorList>
    </citation>
    <scope>NUCLEOTIDE SEQUENCE [GENOMIC DNA]</scope>
    <source>
        <strain>ATCC 44201 / CBS 340.81 / UVM 4-40 / 4-40</strain>
    </source>
</reference>
<sequence length="48" mass="5393">MRSRASAEGIAVLGLRRRGESPVCRRRNVVVCFWGDRSCVEREGCVRG</sequence>
<accession>Q02593</accession>
<comment type="function">
    <text>Activates B-regulated development.</text>
</comment>
<comment type="subcellular location">
    <subcellularLocation>
        <location evidence="2">Cell membrane</location>
        <topology evidence="2">Lipid-anchor</topology>
        <orientation evidence="2">Cytoplasmic side</orientation>
    </subcellularLocation>
</comment>
<name>BAP12_SCHCO</name>
<dbReference type="EMBL" id="U32677">
    <property type="protein sequence ID" value="AAC49155.1"/>
    <property type="molecule type" value="Genomic_DNA"/>
</dbReference>
<dbReference type="PIR" id="S61921">
    <property type="entry name" value="S61921"/>
</dbReference>
<dbReference type="GO" id="GO:0005886">
    <property type="term" value="C:plasma membrane"/>
    <property type="evidence" value="ECO:0007669"/>
    <property type="project" value="UniProtKB-SubCell"/>
</dbReference>
<dbReference type="GO" id="GO:0005186">
    <property type="term" value="F:pheromone activity"/>
    <property type="evidence" value="ECO:0007669"/>
    <property type="project" value="UniProtKB-KW"/>
</dbReference>
<gene>
    <name type="primary">BAP1(2)</name>
</gene>
<protein>
    <recommendedName>
        <fullName>Mating-type pheromone BAP1(2)</fullName>
    </recommendedName>
</protein>